<organism>
    <name type="scientific">Haemophilus influenzae (strain ATCC 51907 / DSM 11121 / KW20 / Rd)</name>
    <dbReference type="NCBI Taxonomy" id="71421"/>
    <lineage>
        <taxon>Bacteria</taxon>
        <taxon>Pseudomonadati</taxon>
        <taxon>Pseudomonadota</taxon>
        <taxon>Gammaproteobacteria</taxon>
        <taxon>Pasteurellales</taxon>
        <taxon>Pasteurellaceae</taxon>
        <taxon>Haemophilus</taxon>
    </lineage>
</organism>
<name>Y395_HAEIN</name>
<gene>
    <name type="ordered locus">HI_0395</name>
</gene>
<comment type="similarity">
    <text evidence="1">Belongs to the UPF0125 (RnfH) family.</text>
</comment>
<sequence>MNQINIEIAYAFPERYYLKSFQVDEGITVQTAITQSGILSQFPEIDLSTNKIGIFSRPIKLTDVLKEGDRIEIYRPLLADPKEIRRKRAAEQAAAKDKEKGA</sequence>
<dbReference type="EMBL" id="L42023">
    <property type="protein sequence ID" value="AAC22054.1"/>
    <property type="molecule type" value="Genomic_DNA"/>
</dbReference>
<dbReference type="PIR" id="C64007">
    <property type="entry name" value="C64007"/>
</dbReference>
<dbReference type="RefSeq" id="NP_438557.1">
    <property type="nucleotide sequence ID" value="NC_000907.1"/>
</dbReference>
<dbReference type="PDB" id="2HJ1">
    <property type="method" value="X-ray"/>
    <property type="resolution" value="2.10 A"/>
    <property type="chains" value="B=1-87"/>
</dbReference>
<dbReference type="PDBsum" id="2HJ1"/>
<dbReference type="SMR" id="P43994"/>
<dbReference type="STRING" id="71421.HI_0395"/>
<dbReference type="DNASU" id="949524"/>
<dbReference type="EnsemblBacteria" id="AAC22054">
    <property type="protein sequence ID" value="AAC22054"/>
    <property type="gene ID" value="HI_0395"/>
</dbReference>
<dbReference type="KEGG" id="hin:HI_0395"/>
<dbReference type="PATRIC" id="fig|71421.8.peg.414"/>
<dbReference type="eggNOG" id="COG2914">
    <property type="taxonomic scope" value="Bacteria"/>
</dbReference>
<dbReference type="HOGENOM" id="CLU_150721_1_0_6"/>
<dbReference type="OrthoDB" id="9796575at2"/>
<dbReference type="PhylomeDB" id="P43994"/>
<dbReference type="BioCyc" id="HINF71421:G1GJ1-410-MONOMER"/>
<dbReference type="Proteomes" id="UP000000579">
    <property type="component" value="Chromosome"/>
</dbReference>
<dbReference type="Gene3D" id="3.10.20.280">
    <property type="entry name" value="RnfH-like"/>
    <property type="match status" value="1"/>
</dbReference>
<dbReference type="HAMAP" id="MF_00460">
    <property type="entry name" value="UPF0125_RnfH"/>
    <property type="match status" value="1"/>
</dbReference>
<dbReference type="InterPro" id="IPR016155">
    <property type="entry name" value="Mopterin_synth/thiamin_S_b"/>
</dbReference>
<dbReference type="InterPro" id="IPR005346">
    <property type="entry name" value="RnfH"/>
</dbReference>
<dbReference type="InterPro" id="IPR037021">
    <property type="entry name" value="RnfH_sf"/>
</dbReference>
<dbReference type="NCBIfam" id="NF002490">
    <property type="entry name" value="PRK01777.1"/>
    <property type="match status" value="1"/>
</dbReference>
<dbReference type="PANTHER" id="PTHR37483">
    <property type="entry name" value="UPF0125 PROTEIN RATB"/>
    <property type="match status" value="1"/>
</dbReference>
<dbReference type="PANTHER" id="PTHR37483:SF1">
    <property type="entry name" value="UPF0125 PROTEIN RATB"/>
    <property type="match status" value="1"/>
</dbReference>
<dbReference type="Pfam" id="PF03658">
    <property type="entry name" value="Ub-RnfH"/>
    <property type="match status" value="1"/>
</dbReference>
<dbReference type="SUPFAM" id="SSF54285">
    <property type="entry name" value="MoaD/ThiS"/>
    <property type="match status" value="1"/>
</dbReference>
<evidence type="ECO:0000305" key="1"/>
<proteinExistence type="evidence at protein level"/>
<keyword id="KW-0002">3D-structure</keyword>
<keyword id="KW-1185">Reference proteome</keyword>
<feature type="chain" id="PRO_0000192491" description="UPF0125 protein HI_0395">
    <location>
        <begin position="1"/>
        <end position="102"/>
    </location>
</feature>
<protein>
    <recommendedName>
        <fullName>UPF0125 protein HI_0395</fullName>
    </recommendedName>
</protein>
<accession>P43994</accession>
<reference key="1">
    <citation type="journal article" date="1995" name="Science">
        <title>Whole-genome random sequencing and assembly of Haemophilus influenzae Rd.</title>
        <authorList>
            <person name="Fleischmann R.D."/>
            <person name="Adams M.D."/>
            <person name="White O."/>
            <person name="Clayton R.A."/>
            <person name="Kirkness E.F."/>
            <person name="Kerlavage A.R."/>
            <person name="Bult C.J."/>
            <person name="Tomb J.-F."/>
            <person name="Dougherty B.A."/>
            <person name="Merrick J.M."/>
            <person name="McKenney K."/>
            <person name="Sutton G.G."/>
            <person name="FitzHugh W."/>
            <person name="Fields C.A."/>
            <person name="Gocayne J.D."/>
            <person name="Scott J.D."/>
            <person name="Shirley R."/>
            <person name="Liu L.-I."/>
            <person name="Glodek A."/>
            <person name="Kelley J.M."/>
            <person name="Weidman J.F."/>
            <person name="Phillips C.A."/>
            <person name="Spriggs T."/>
            <person name="Hedblom E."/>
            <person name="Cotton M.D."/>
            <person name="Utterback T.R."/>
            <person name="Hanna M.C."/>
            <person name="Nguyen D.T."/>
            <person name="Saudek D.M."/>
            <person name="Brandon R.C."/>
            <person name="Fine L.D."/>
            <person name="Fritchman J.L."/>
            <person name="Fuhrmann J.L."/>
            <person name="Geoghagen N.S.M."/>
            <person name="Gnehm C.L."/>
            <person name="McDonald L.A."/>
            <person name="Small K.V."/>
            <person name="Fraser C.M."/>
            <person name="Smith H.O."/>
            <person name="Venter J.C."/>
        </authorList>
    </citation>
    <scope>NUCLEOTIDE SEQUENCE [LARGE SCALE GENOMIC DNA]</scope>
    <source>
        <strain>ATCC 51907 / DSM 11121 / KW20 / Rd</strain>
    </source>
</reference>
<reference key="2">
    <citation type="journal article" date="2000" name="Electrophoresis">
        <title>Two-dimensional map of the proteome of Haemophilus influenzae.</title>
        <authorList>
            <person name="Langen H."/>
            <person name="Takacs B."/>
            <person name="Evers S."/>
            <person name="Berndt P."/>
            <person name="Lahm H.W."/>
            <person name="Wipf B."/>
            <person name="Gray C."/>
            <person name="Fountoulakis M."/>
        </authorList>
    </citation>
    <scope>IDENTIFICATION BY MASS SPECTROMETRY</scope>
    <source>
        <strain>ATCC 51907 / DSM 11121 / KW20 / Rd</strain>
    </source>
</reference>